<protein>
    <recommendedName>
        <fullName>Nucleolar MIF4G domain-containing protein 1</fullName>
    </recommendedName>
    <alternativeName>
        <fullName>SGD1 homolog</fullName>
    </alternativeName>
</protein>
<accession>Q5C9Z4</accession>
<accession>Q96I08</accession>
<reference key="1">
    <citation type="journal article" date="2005" name="Gene">
        <title>Identification of NOM1, a nucleolar, eIF4A binding protein encoded within the chromosome 7q36 breakpoint region targeted in cases of pediatric acute myeloid leukemia.</title>
        <authorList>
            <person name="Simmons H.M."/>
            <person name="Ruis B.L."/>
            <person name="Kapoor M."/>
            <person name="Hudacek A.W."/>
            <person name="Conklin K.F."/>
        </authorList>
    </citation>
    <scope>NUCLEOTIDE SEQUENCE [MRNA]</scope>
    <scope>POSSIBLE INTERACTION WITH EIF4A1; EIF4A2 AND EIF4A3</scope>
    <scope>SUBCELLULAR LOCATION</scope>
</reference>
<reference key="2">
    <citation type="journal article" date="1999" name="Genomics">
        <title>A physical and transcriptional map of the preaxial polydactyly locus on chromosome 7q36.</title>
        <authorList>
            <person name="Heus H.C."/>
            <person name="Hing A."/>
            <person name="van Baren M.J."/>
            <person name="Joosse M."/>
            <person name="Breedveld G.J."/>
            <person name="Wang J.C."/>
            <person name="Burgess A."/>
            <person name="Donnis-Keller H."/>
            <person name="Berglund C."/>
            <person name="Zguricas J."/>
            <person name="Scherer S.W."/>
            <person name="Rommens J.M."/>
            <person name="Oostra B.A."/>
            <person name="Heutink P."/>
        </authorList>
    </citation>
    <scope>NUCLEOTIDE SEQUENCE [MRNA] OF 180-860</scope>
    <scope>TISSUE SPECIFICITY</scope>
</reference>
<reference key="3">
    <citation type="journal article" date="2004" name="Genome Res.">
        <title>The status, quality, and expansion of the NIH full-length cDNA project: the Mammalian Gene Collection (MGC).</title>
        <authorList>
            <consortium name="The MGC Project Team"/>
        </authorList>
    </citation>
    <scope>NUCLEOTIDE SEQUENCE [LARGE SCALE MRNA] OF 566-860</scope>
    <source>
        <tissue>Muscle</tissue>
    </source>
</reference>
<reference key="4">
    <citation type="journal article" date="2008" name="J. Biol. Chem.">
        <title>NOM1 targets protein phosphatase I to the nucleolus.</title>
        <authorList>
            <person name="Gunawardena S.R."/>
            <person name="Ruis B.L."/>
            <person name="Meyer J.A."/>
            <person name="Kapoor M."/>
            <person name="Conklin K.F."/>
        </authorList>
    </citation>
    <scope>FUNCTION</scope>
    <scope>INTERACTION WITH PPP1CA AND PPP1CC</scope>
    <scope>SUBCELLULAR LOCATION</scope>
    <scope>MUTAGENESIS OF VAL-308 AND PHE-310</scope>
</reference>
<reference key="5">
    <citation type="journal article" date="2008" name="Proc. Natl. Acad. Sci. U.S.A.">
        <title>A quantitative atlas of mitotic phosphorylation.</title>
        <authorList>
            <person name="Dephoure N."/>
            <person name="Zhou C."/>
            <person name="Villen J."/>
            <person name="Beausoleil S.A."/>
            <person name="Bakalarski C.E."/>
            <person name="Elledge S.J."/>
            <person name="Gygi S.P."/>
        </authorList>
    </citation>
    <scope>PHOSPHORYLATION [LARGE SCALE ANALYSIS] AT SER-317; SER-320 AND SER-321</scope>
    <scope>IDENTIFICATION BY MASS SPECTROMETRY [LARGE SCALE ANALYSIS]</scope>
    <source>
        <tissue>Cervix carcinoma</tissue>
    </source>
</reference>
<reference key="6">
    <citation type="journal article" date="2010" name="Sci. Signal.">
        <title>Quantitative phosphoproteomics reveals widespread full phosphorylation site occupancy during mitosis.</title>
        <authorList>
            <person name="Olsen J.V."/>
            <person name="Vermeulen M."/>
            <person name="Santamaria A."/>
            <person name="Kumar C."/>
            <person name="Miller M.L."/>
            <person name="Jensen L.J."/>
            <person name="Gnad F."/>
            <person name="Cox J."/>
            <person name="Jensen T.S."/>
            <person name="Nigg E.A."/>
            <person name="Brunak S."/>
            <person name="Mann M."/>
        </authorList>
    </citation>
    <scope>PHOSPHORYLATION [LARGE SCALE ANALYSIS] AT SER-317; SER-320 AND SER-321</scope>
    <scope>IDENTIFICATION BY MASS SPECTROMETRY [LARGE SCALE ANALYSIS]</scope>
    <source>
        <tissue>Cervix carcinoma</tissue>
    </source>
</reference>
<reference key="7">
    <citation type="journal article" date="2011" name="BMC Syst. Biol.">
        <title>Initial characterization of the human central proteome.</title>
        <authorList>
            <person name="Burkard T.R."/>
            <person name="Planyavsky M."/>
            <person name="Kaupe I."/>
            <person name="Breitwieser F.P."/>
            <person name="Buerckstuemmer T."/>
            <person name="Bennett K.L."/>
            <person name="Superti-Furga G."/>
            <person name="Colinge J."/>
        </authorList>
    </citation>
    <scope>IDENTIFICATION BY MASS SPECTROMETRY [LARGE SCALE ANALYSIS]</scope>
</reference>
<reference key="8">
    <citation type="journal article" date="2011" name="Sci. Signal.">
        <title>System-wide temporal characterization of the proteome and phosphoproteome of human embryonic stem cell differentiation.</title>
        <authorList>
            <person name="Rigbolt K.T."/>
            <person name="Prokhorova T.A."/>
            <person name="Akimov V."/>
            <person name="Henningsen J."/>
            <person name="Johansen P.T."/>
            <person name="Kratchmarova I."/>
            <person name="Kassem M."/>
            <person name="Mann M."/>
            <person name="Olsen J.V."/>
            <person name="Blagoev B."/>
        </authorList>
    </citation>
    <scope>PHOSPHORYLATION [LARGE SCALE ANALYSIS] AT SER-317; SER-320 AND SER-321</scope>
    <scope>IDENTIFICATION BY MASS SPECTROMETRY [LARGE SCALE ANALYSIS]</scope>
</reference>
<reference key="9">
    <citation type="journal article" date="2013" name="J. Proteome Res.">
        <title>Toward a comprehensive characterization of a human cancer cell phosphoproteome.</title>
        <authorList>
            <person name="Zhou H."/>
            <person name="Di Palma S."/>
            <person name="Preisinger C."/>
            <person name="Peng M."/>
            <person name="Polat A.N."/>
            <person name="Heck A.J."/>
            <person name="Mohammed S."/>
        </authorList>
    </citation>
    <scope>PHOSPHORYLATION [LARGE SCALE ANALYSIS] AT SER-57 AND SER-139</scope>
    <scope>IDENTIFICATION BY MASS SPECTROMETRY [LARGE SCALE ANALYSIS]</scope>
    <source>
        <tissue>Cervix carcinoma</tissue>
        <tissue>Erythroleukemia</tissue>
    </source>
</reference>
<name>NOM1_HUMAN</name>
<keyword id="KW-0539">Nucleus</keyword>
<keyword id="KW-0597">Phosphoprotein</keyword>
<keyword id="KW-1267">Proteomics identification</keyword>
<keyword id="KW-1185">Reference proteome</keyword>
<gene>
    <name type="primary">NOM1</name>
    <name type="synonym">C7orf3</name>
</gene>
<feature type="chain" id="PRO_0000286823" description="Nucleolar MIF4G domain-containing protein 1">
    <location>
        <begin position="1"/>
        <end position="860"/>
    </location>
</feature>
<feature type="domain" description="MIF4G" evidence="1">
    <location>
        <begin position="362"/>
        <end position="559"/>
    </location>
</feature>
<feature type="domain" description="MI" evidence="1">
    <location>
        <begin position="654"/>
        <end position="770"/>
    </location>
</feature>
<feature type="region of interest" description="Necessary for nucleolar localization and for targeting PPP1CA to the nucleolus">
    <location>
        <begin position="1"/>
        <end position="269"/>
    </location>
</feature>
<feature type="region of interest" description="Disordered" evidence="2">
    <location>
        <begin position="1"/>
        <end position="172"/>
    </location>
</feature>
<feature type="region of interest" description="Disordered" evidence="2">
    <location>
        <begin position="191"/>
        <end position="211"/>
    </location>
</feature>
<feature type="region of interest" description="Disordered" evidence="2">
    <location>
        <begin position="226"/>
        <end position="339"/>
    </location>
</feature>
<feature type="short sequence motif" description="Required for efficient binding to PPP1CA and for targeting PPP1CA to the nucleolus">
    <location>
        <begin position="307"/>
        <end position="310"/>
    </location>
</feature>
<feature type="compositionally biased region" description="Basic residues" evidence="2">
    <location>
        <begin position="20"/>
        <end position="31"/>
    </location>
</feature>
<feature type="compositionally biased region" description="Basic residues" evidence="2">
    <location>
        <begin position="77"/>
        <end position="99"/>
    </location>
</feature>
<feature type="compositionally biased region" description="Basic and acidic residues" evidence="2">
    <location>
        <begin position="115"/>
        <end position="131"/>
    </location>
</feature>
<feature type="compositionally biased region" description="Basic residues" evidence="2">
    <location>
        <begin position="142"/>
        <end position="151"/>
    </location>
</feature>
<feature type="compositionally biased region" description="Low complexity" evidence="2">
    <location>
        <begin position="152"/>
        <end position="169"/>
    </location>
</feature>
<feature type="compositionally biased region" description="Acidic residues" evidence="2">
    <location>
        <begin position="249"/>
        <end position="267"/>
    </location>
</feature>
<feature type="compositionally biased region" description="Acidic residues" evidence="2">
    <location>
        <begin position="278"/>
        <end position="293"/>
    </location>
</feature>
<feature type="compositionally biased region" description="Acidic residues" evidence="2">
    <location>
        <begin position="312"/>
        <end position="325"/>
    </location>
</feature>
<feature type="modified residue" description="Phosphoserine" evidence="10">
    <location>
        <position position="57"/>
    </location>
</feature>
<feature type="modified residue" description="Phosphoserine" evidence="10">
    <location>
        <position position="139"/>
    </location>
</feature>
<feature type="modified residue" description="Phosphoserine" evidence="7 8 9">
    <location>
        <position position="317"/>
    </location>
</feature>
<feature type="modified residue" description="Phosphoserine" evidence="7 8 9">
    <location>
        <position position="320"/>
    </location>
</feature>
<feature type="modified residue" description="Phosphoserine" evidence="7 8 9">
    <location>
        <position position="321"/>
    </location>
</feature>
<feature type="sequence variant" id="VAR_061999" description="In dbSNP:rs6969990.">
    <original>R</original>
    <variation>G</variation>
    <location>
        <position position="24"/>
    </location>
</feature>
<feature type="sequence variant" id="VAR_032187" description="In dbSNP:rs6952214.">
    <original>H</original>
    <variation>P</variation>
    <location>
        <position position="122"/>
    </location>
</feature>
<feature type="sequence variant" id="VAR_053051" description="In dbSNP:rs12919.">
    <original>M</original>
    <variation>V</variation>
    <location>
        <position position="723"/>
    </location>
</feature>
<feature type="sequence variant" id="VAR_032188" description="In dbSNP:rs2302445.">
    <original>R</original>
    <variation>H</variation>
    <location>
        <position position="779"/>
    </location>
</feature>
<feature type="sequence variant" id="VAR_032189" description="In dbSNP:rs2302443.">
    <original>V</original>
    <variation>L</variation>
    <location>
        <position position="804"/>
    </location>
</feature>
<feature type="sequence variant" id="VAR_032190" description="In dbSNP:rs12919.">
    <original>V</original>
    <variation>M</variation>
    <location>
        <position position="812"/>
    </location>
</feature>
<feature type="mutagenesis site" description="Loss of interaction with PPP1CA and loss of ability to relocalize PPP1CA to the nucleolus; when associated with A-310." evidence="5">
    <original>V</original>
    <variation>A</variation>
    <location>
        <position position="308"/>
    </location>
</feature>
<feature type="mutagenesis site" description="Loss of interaction with PPP1CA and loss of ability to relocalize PPP1CA to the nucleolus; when associated with A-308." evidence="5">
    <original>F</original>
    <variation>A</variation>
    <location>
        <position position="310"/>
    </location>
</feature>
<sequence length="860" mass="96257">MAASRSAGEAGPGGSQGRVVRMKRRGGRGPRRGPAGGGEKALKRLKLAVEEFVHATSEGEAPGGCEGRGAPVSFRPGGRKSRKELRKEKRHLRKARRLQRTAGPEQGPGLGGRSGAEEASGHRQDTEERARPAPSRDPSPPRKPRPSRVKAKATAATAKTRPSAAATAAARKRALLAANEEEDREIRKLERCLGLNKRKKKDGSSSVPLSFARDGLDYILGALESGKNSGLYDSSGEEEEDAGQTLPESDLESDSQDESEEEEEGDVEKEKKAQEAEAQSEDDDEDTEEEQGEEKEKGAQEKRRGKRVRFAEDEEKSENSSEDGDITDKSLCGSGEKYIPPHVRQAEETVDFKKKEELERLKKHVKGLLNRLSEPNMASISGQLEELYMAHSRKDMNDTLTSALMGACVTASAMPSRLMMEHVLLVSILHHTVGIEVGAHFLEAVVRKFDAIYKYGSEGKECDNLFTVIAHLYNFHVVQSLLIFDILKKLIGTFTEKDIELILLMLKNVGFSLRKDDALSLKELITEAQTKASGAGSEFQDQTRIRFMLETMLALKNNDMRKIPGYDPEPVEKLRKLQRALVRNAGSGSETQLRVSWDSVLSAEQTGRWWIVGSAWSGAPMIDNSHHTHLQKQLVGTVSSKILELARKQRMNTDIRRNIFCTIMTSEDFLDAFEKLLKLGLKDQQEREIIHVLMDCCLQEKTYNPFYAFLASKFCEYERRFQMTFQFSIWDKFRDLENLPATNFSNLVHLVAHLLKTKSLSLSILKVVEFSELDKPRVRFLRKVLSILLMETEVEDLSLIFTRVSDNPKLGVLREGLKLFISHFLLKNAQAHRSADEANVLREKADLATKCLQGKASLRM</sequence>
<dbReference type="EMBL" id="AY576779">
    <property type="protein sequence ID" value="AAT39521.1"/>
    <property type="molecule type" value="mRNA"/>
</dbReference>
<dbReference type="EMBL" id="AF107455">
    <property type="status" value="NOT_ANNOTATED_CDS"/>
    <property type="molecule type" value="mRNA"/>
</dbReference>
<dbReference type="EMBL" id="BC007902">
    <property type="protein sequence ID" value="AAH07902.2"/>
    <property type="molecule type" value="mRNA"/>
</dbReference>
<dbReference type="CCDS" id="CCDS34787.1"/>
<dbReference type="RefSeq" id="NP_612409.1">
    <property type="nucleotide sequence ID" value="NM_138400.2"/>
</dbReference>
<dbReference type="SMR" id="Q5C9Z4"/>
<dbReference type="BioGRID" id="122182">
    <property type="interactions" value="178"/>
</dbReference>
<dbReference type="ELM" id="Q5C9Z4"/>
<dbReference type="FunCoup" id="Q5C9Z4">
    <property type="interactions" value="2237"/>
</dbReference>
<dbReference type="IntAct" id="Q5C9Z4">
    <property type="interactions" value="110"/>
</dbReference>
<dbReference type="MINT" id="Q5C9Z4"/>
<dbReference type="STRING" id="9606.ENSP00000275820"/>
<dbReference type="GlyCosmos" id="Q5C9Z4">
    <property type="glycosylation" value="1 site, 1 glycan"/>
</dbReference>
<dbReference type="GlyGen" id="Q5C9Z4">
    <property type="glycosylation" value="1 site, 1 O-linked glycan (1 site)"/>
</dbReference>
<dbReference type="iPTMnet" id="Q5C9Z4"/>
<dbReference type="PhosphoSitePlus" id="Q5C9Z4"/>
<dbReference type="SwissPalm" id="Q5C9Z4"/>
<dbReference type="BioMuta" id="NOM1"/>
<dbReference type="DMDM" id="74707675"/>
<dbReference type="jPOST" id="Q5C9Z4"/>
<dbReference type="MassIVE" id="Q5C9Z4"/>
<dbReference type="PaxDb" id="9606-ENSP00000275820"/>
<dbReference type="PeptideAtlas" id="Q5C9Z4"/>
<dbReference type="ProteomicsDB" id="62725"/>
<dbReference type="Pumba" id="Q5C9Z4"/>
<dbReference type="Antibodypedia" id="56748">
    <property type="antibodies" value="64 antibodies from 19 providers"/>
</dbReference>
<dbReference type="DNASU" id="64434"/>
<dbReference type="Ensembl" id="ENST00000275820.4">
    <property type="protein sequence ID" value="ENSP00000275820.3"/>
    <property type="gene ID" value="ENSG00000146909.8"/>
</dbReference>
<dbReference type="GeneID" id="64434"/>
<dbReference type="KEGG" id="hsa:64434"/>
<dbReference type="MANE-Select" id="ENST00000275820.4">
    <property type="protein sequence ID" value="ENSP00000275820.3"/>
    <property type="RefSeq nucleotide sequence ID" value="NM_138400.2"/>
    <property type="RefSeq protein sequence ID" value="NP_612409.1"/>
</dbReference>
<dbReference type="UCSC" id="uc003wmy.3">
    <property type="organism name" value="human"/>
</dbReference>
<dbReference type="AGR" id="HGNC:13244"/>
<dbReference type="CTD" id="64434"/>
<dbReference type="DisGeNET" id="64434"/>
<dbReference type="GeneCards" id="NOM1"/>
<dbReference type="HGNC" id="HGNC:13244">
    <property type="gene designation" value="NOM1"/>
</dbReference>
<dbReference type="HPA" id="ENSG00000146909">
    <property type="expression patterns" value="Low tissue specificity"/>
</dbReference>
<dbReference type="MIM" id="611269">
    <property type="type" value="gene"/>
</dbReference>
<dbReference type="neXtProt" id="NX_Q5C9Z4"/>
<dbReference type="OpenTargets" id="ENSG00000146909"/>
<dbReference type="PharmGKB" id="PA25946"/>
<dbReference type="VEuPathDB" id="HostDB:ENSG00000146909"/>
<dbReference type="eggNOG" id="KOG2141">
    <property type="taxonomic scope" value="Eukaryota"/>
</dbReference>
<dbReference type="GeneTree" id="ENSGT00940000153458"/>
<dbReference type="HOGENOM" id="CLU_006786_0_1_1"/>
<dbReference type="InParanoid" id="Q5C9Z4"/>
<dbReference type="OMA" id="FMVDILN"/>
<dbReference type="OrthoDB" id="10260961at2759"/>
<dbReference type="PAN-GO" id="Q5C9Z4">
    <property type="GO annotations" value="3 GO annotations based on evolutionary models"/>
</dbReference>
<dbReference type="PhylomeDB" id="Q5C9Z4"/>
<dbReference type="TreeFam" id="TF312808"/>
<dbReference type="PathwayCommons" id="Q5C9Z4"/>
<dbReference type="SignaLink" id="Q5C9Z4"/>
<dbReference type="BioGRID-ORCS" id="64434">
    <property type="hits" value="636 hits in 1164 CRISPR screens"/>
</dbReference>
<dbReference type="CD-CODE" id="91857CE7">
    <property type="entry name" value="Nucleolus"/>
</dbReference>
<dbReference type="ChiTaRS" id="NOM1">
    <property type="organism name" value="human"/>
</dbReference>
<dbReference type="GeneWiki" id="NOM1"/>
<dbReference type="GenomeRNAi" id="64434"/>
<dbReference type="Pharos" id="Q5C9Z4">
    <property type="development level" value="Tbio"/>
</dbReference>
<dbReference type="PRO" id="PR:Q5C9Z4"/>
<dbReference type="Proteomes" id="UP000005640">
    <property type="component" value="Chromosome 7"/>
</dbReference>
<dbReference type="RNAct" id="Q5C9Z4">
    <property type="molecule type" value="protein"/>
</dbReference>
<dbReference type="Bgee" id="ENSG00000146909">
    <property type="expression patterns" value="Expressed in epithelial cell of pancreas and 175 other cell types or tissues"/>
</dbReference>
<dbReference type="GO" id="GO:0005730">
    <property type="term" value="C:nucleolus"/>
    <property type="evidence" value="ECO:0000314"/>
    <property type="project" value="UniProtKB"/>
</dbReference>
<dbReference type="GO" id="GO:0003723">
    <property type="term" value="F:RNA binding"/>
    <property type="evidence" value="ECO:0007005"/>
    <property type="project" value="UniProtKB"/>
</dbReference>
<dbReference type="GO" id="GO:0048820">
    <property type="term" value="P:hair follicle maturation"/>
    <property type="evidence" value="ECO:0007669"/>
    <property type="project" value="Ensembl"/>
</dbReference>
<dbReference type="GO" id="GO:0042274">
    <property type="term" value="P:ribosomal small subunit biogenesis"/>
    <property type="evidence" value="ECO:0000318"/>
    <property type="project" value="GO_Central"/>
</dbReference>
<dbReference type="FunFam" id="1.25.40.180:FF:000032">
    <property type="entry name" value="Nucleolar MIF4G domain-containing protein 1"/>
    <property type="match status" value="1"/>
</dbReference>
<dbReference type="Gene3D" id="1.25.40.180">
    <property type="match status" value="1"/>
</dbReference>
<dbReference type="InterPro" id="IPR016024">
    <property type="entry name" value="ARM-type_fold"/>
</dbReference>
<dbReference type="InterPro" id="IPR050781">
    <property type="entry name" value="CWC22_splicing_factor"/>
</dbReference>
<dbReference type="InterPro" id="IPR003891">
    <property type="entry name" value="Initiation_fac_eIF4g_MI"/>
</dbReference>
<dbReference type="InterPro" id="IPR003890">
    <property type="entry name" value="MIF4G-like_typ-3"/>
</dbReference>
<dbReference type="PANTHER" id="PTHR18034">
    <property type="entry name" value="CELL CYCLE CONTROL PROTEIN CWF22-RELATED"/>
    <property type="match status" value="1"/>
</dbReference>
<dbReference type="PANTHER" id="PTHR18034:SF4">
    <property type="entry name" value="NUCLEOLAR MIF4G DOMAIN-CONTAINING PROTEIN 1"/>
    <property type="match status" value="1"/>
</dbReference>
<dbReference type="Pfam" id="PF02847">
    <property type="entry name" value="MA3"/>
    <property type="match status" value="1"/>
</dbReference>
<dbReference type="Pfam" id="PF02854">
    <property type="entry name" value="MIF4G"/>
    <property type="match status" value="1"/>
</dbReference>
<dbReference type="SMART" id="SM00544">
    <property type="entry name" value="MA3"/>
    <property type="match status" value="1"/>
</dbReference>
<dbReference type="SMART" id="SM00543">
    <property type="entry name" value="MIF4G"/>
    <property type="match status" value="1"/>
</dbReference>
<dbReference type="SUPFAM" id="SSF48371">
    <property type="entry name" value="ARM repeat"/>
    <property type="match status" value="1"/>
</dbReference>
<dbReference type="PROSITE" id="PS51366">
    <property type="entry name" value="MI"/>
    <property type="match status" value="1"/>
</dbReference>
<organism>
    <name type="scientific">Homo sapiens</name>
    <name type="common">Human</name>
    <dbReference type="NCBI Taxonomy" id="9606"/>
    <lineage>
        <taxon>Eukaryota</taxon>
        <taxon>Metazoa</taxon>
        <taxon>Chordata</taxon>
        <taxon>Craniata</taxon>
        <taxon>Vertebrata</taxon>
        <taxon>Euteleostomi</taxon>
        <taxon>Mammalia</taxon>
        <taxon>Eutheria</taxon>
        <taxon>Euarchontoglires</taxon>
        <taxon>Primates</taxon>
        <taxon>Haplorrhini</taxon>
        <taxon>Catarrhini</taxon>
        <taxon>Hominidae</taxon>
        <taxon>Homo</taxon>
    </lineage>
</organism>
<evidence type="ECO:0000255" key="1">
    <source>
        <dbReference type="PROSITE-ProRule" id="PRU00698"/>
    </source>
</evidence>
<evidence type="ECO:0000256" key="2">
    <source>
        <dbReference type="SAM" id="MobiDB-lite"/>
    </source>
</evidence>
<evidence type="ECO:0000269" key="3">
    <source>
    </source>
</evidence>
<evidence type="ECO:0000269" key="4">
    <source>
    </source>
</evidence>
<evidence type="ECO:0000269" key="5">
    <source>
    </source>
</evidence>
<evidence type="ECO:0000305" key="6"/>
<evidence type="ECO:0007744" key="7">
    <source>
    </source>
</evidence>
<evidence type="ECO:0007744" key="8">
    <source>
    </source>
</evidence>
<evidence type="ECO:0007744" key="9">
    <source>
    </source>
</evidence>
<evidence type="ECO:0007744" key="10">
    <source>
    </source>
</evidence>
<comment type="function">
    <text evidence="5">Plays a role in targeting PPP1CA to the nucleolus.</text>
</comment>
<comment type="subunit">
    <text evidence="5">May interact with EIF4A1, EIF4A2 and EIF4A3. Interacts with PPP1CA and PPP1CC.</text>
</comment>
<comment type="interaction">
    <interactant intactId="EBI-2685618">
        <id>Q5C9Z4</id>
    </interactant>
    <interactant intactId="EBI-299104">
        <id>P38919</id>
        <label>EIF4A3</label>
    </interactant>
    <organismsDiffer>false</organismsDiffer>
    <experiments>4</experiments>
</comment>
<comment type="interaction">
    <interactant intactId="EBI-2685618">
        <id>Q5C9Z4</id>
    </interactant>
    <interactant intactId="EBI-9995414">
        <id>Q8NEJ9</id>
        <label>NGDN</label>
    </interactant>
    <organismsDiffer>false</organismsDiffer>
    <experiments>3</experiments>
</comment>
<comment type="interaction">
    <interactant intactId="EBI-2685618">
        <id>Q5C9Z4</id>
    </interactant>
    <interactant intactId="EBI-593303">
        <id>P78362</id>
        <label>SRPK2</label>
    </interactant>
    <organismsDiffer>false</organismsDiffer>
    <experiments>3</experiments>
</comment>
<comment type="subcellular location">
    <subcellularLocation>
        <location evidence="4 5">Nucleus</location>
        <location evidence="4 5">Nucleolus</location>
    </subcellularLocation>
</comment>
<comment type="tissue specificity">
    <text evidence="3">Expressed in heart and skeletal muscle.</text>
</comment>
<comment type="similarity">
    <text evidence="6">Belongs to the CWC22 family.</text>
</comment>
<proteinExistence type="evidence at protein level"/>